<organism>
    <name type="scientific">Synechococcus sp. (strain JA-3-3Ab)</name>
    <name type="common">Cyanobacteria bacterium Yellowstone A-Prime</name>
    <dbReference type="NCBI Taxonomy" id="321327"/>
    <lineage>
        <taxon>Bacteria</taxon>
        <taxon>Bacillati</taxon>
        <taxon>Cyanobacteriota</taxon>
        <taxon>Cyanophyceae</taxon>
        <taxon>Synechococcales</taxon>
        <taxon>Synechococcaceae</taxon>
        <taxon>Synechococcus</taxon>
    </lineage>
</organism>
<sequence length="403" mass="44315">MGRAKKVVLAYSGGVDTSVCIPYLKHEWGVESVVTLAVDLGQGAELEAIQAKALRAGAEQSLVREAVQTLIADYAFPAIQANALYEQRYPLSTALARPLIAQLLVEVAEEVGADAVAHGCTGKGNDQVRFDLAIAALNPKLKVLAPAREWGMTREETIAYGERYGIPMPVQKSSPYSIDLNILGRSVEAGILEDADQEPPEEVYALTRSIAQTPDEPAYVEIAFEEGIPVELDGQRLGPRALFERLNALAGSHGVGRIDMIEDRLVGIKSREIYECPALTVLIQAHRELESLTLTREVLHYKYGIETTYSQLVYNGLWYSPLREALDAFIRTTQKSVTGVVRMRLHKGQAVCVGRRSPYSLYNAELATYGEGDQFDHRAAEGFIYIWGLPTRTWAQVHRGSGA</sequence>
<gene>
    <name evidence="1" type="primary">argG</name>
    <name type="ordered locus">CYA_0710</name>
</gene>
<proteinExistence type="inferred from homology"/>
<feature type="chain" id="PRO_0000263985" description="Argininosuccinate synthase">
    <location>
        <begin position="1"/>
        <end position="403"/>
    </location>
</feature>
<feature type="binding site" evidence="1">
    <location>
        <begin position="10"/>
        <end position="18"/>
    </location>
    <ligand>
        <name>ATP</name>
        <dbReference type="ChEBI" id="CHEBI:30616"/>
    </ligand>
</feature>
<feature type="binding site" evidence="1">
    <location>
        <position position="89"/>
    </location>
    <ligand>
        <name>L-citrulline</name>
        <dbReference type="ChEBI" id="CHEBI:57743"/>
    </ligand>
</feature>
<feature type="binding site" evidence="1">
    <location>
        <position position="119"/>
    </location>
    <ligand>
        <name>ATP</name>
        <dbReference type="ChEBI" id="CHEBI:30616"/>
    </ligand>
</feature>
<feature type="binding site" evidence="1">
    <location>
        <position position="121"/>
    </location>
    <ligand>
        <name>L-aspartate</name>
        <dbReference type="ChEBI" id="CHEBI:29991"/>
    </ligand>
</feature>
<feature type="binding site" evidence="1">
    <location>
        <position position="125"/>
    </location>
    <ligand>
        <name>L-aspartate</name>
        <dbReference type="ChEBI" id="CHEBI:29991"/>
    </ligand>
</feature>
<feature type="binding site" evidence="1">
    <location>
        <position position="125"/>
    </location>
    <ligand>
        <name>L-citrulline</name>
        <dbReference type="ChEBI" id="CHEBI:57743"/>
    </ligand>
</feature>
<feature type="binding site" evidence="1">
    <location>
        <position position="126"/>
    </location>
    <ligand>
        <name>L-aspartate</name>
        <dbReference type="ChEBI" id="CHEBI:29991"/>
    </ligand>
</feature>
<feature type="binding site" evidence="1">
    <location>
        <position position="129"/>
    </location>
    <ligand>
        <name>L-citrulline</name>
        <dbReference type="ChEBI" id="CHEBI:57743"/>
    </ligand>
</feature>
<feature type="binding site" evidence="1">
    <location>
        <position position="177"/>
    </location>
    <ligand>
        <name>L-citrulline</name>
        <dbReference type="ChEBI" id="CHEBI:57743"/>
    </ligand>
</feature>
<feature type="binding site" evidence="1">
    <location>
        <position position="186"/>
    </location>
    <ligand>
        <name>L-citrulline</name>
        <dbReference type="ChEBI" id="CHEBI:57743"/>
    </ligand>
</feature>
<feature type="binding site" evidence="1">
    <location>
        <position position="262"/>
    </location>
    <ligand>
        <name>L-citrulline</name>
        <dbReference type="ChEBI" id="CHEBI:57743"/>
    </ligand>
</feature>
<feature type="binding site" evidence="1">
    <location>
        <position position="274"/>
    </location>
    <ligand>
        <name>L-citrulline</name>
        <dbReference type="ChEBI" id="CHEBI:57743"/>
    </ligand>
</feature>
<keyword id="KW-0028">Amino-acid biosynthesis</keyword>
<keyword id="KW-0055">Arginine biosynthesis</keyword>
<keyword id="KW-0067">ATP-binding</keyword>
<keyword id="KW-0963">Cytoplasm</keyword>
<keyword id="KW-0436">Ligase</keyword>
<keyword id="KW-0547">Nucleotide-binding</keyword>
<accession>Q2JWE1</accession>
<reference key="1">
    <citation type="journal article" date="2007" name="ISME J.">
        <title>Population level functional diversity in a microbial community revealed by comparative genomic and metagenomic analyses.</title>
        <authorList>
            <person name="Bhaya D."/>
            <person name="Grossman A.R."/>
            <person name="Steunou A.-S."/>
            <person name="Khuri N."/>
            <person name="Cohan F.M."/>
            <person name="Hamamura N."/>
            <person name="Melendrez M.C."/>
            <person name="Bateson M.M."/>
            <person name="Ward D.M."/>
            <person name="Heidelberg J.F."/>
        </authorList>
    </citation>
    <scope>NUCLEOTIDE SEQUENCE [LARGE SCALE GENOMIC DNA]</scope>
    <source>
        <strain>JA-3-3Ab</strain>
    </source>
</reference>
<protein>
    <recommendedName>
        <fullName evidence="1">Argininosuccinate synthase</fullName>
        <ecNumber evidence="1">6.3.4.5</ecNumber>
    </recommendedName>
    <alternativeName>
        <fullName evidence="1">Citrulline--aspartate ligase</fullName>
    </alternativeName>
</protein>
<dbReference type="EC" id="6.3.4.5" evidence="1"/>
<dbReference type="EMBL" id="CP000239">
    <property type="protein sequence ID" value="ABC98922.1"/>
    <property type="molecule type" value="Genomic_DNA"/>
</dbReference>
<dbReference type="RefSeq" id="WP_011429604.1">
    <property type="nucleotide sequence ID" value="NC_007775.1"/>
</dbReference>
<dbReference type="SMR" id="Q2JWE1"/>
<dbReference type="STRING" id="321327.CYA_0710"/>
<dbReference type="KEGG" id="cya:CYA_0710"/>
<dbReference type="eggNOG" id="COG0137">
    <property type="taxonomic scope" value="Bacteria"/>
</dbReference>
<dbReference type="HOGENOM" id="CLU_032784_4_2_3"/>
<dbReference type="OrthoDB" id="9801641at2"/>
<dbReference type="UniPathway" id="UPA00068">
    <property type="reaction ID" value="UER00113"/>
</dbReference>
<dbReference type="Proteomes" id="UP000008818">
    <property type="component" value="Chromosome"/>
</dbReference>
<dbReference type="GO" id="GO:0005737">
    <property type="term" value="C:cytoplasm"/>
    <property type="evidence" value="ECO:0007669"/>
    <property type="project" value="UniProtKB-SubCell"/>
</dbReference>
<dbReference type="GO" id="GO:0004055">
    <property type="term" value="F:argininosuccinate synthase activity"/>
    <property type="evidence" value="ECO:0007669"/>
    <property type="project" value="UniProtKB-UniRule"/>
</dbReference>
<dbReference type="GO" id="GO:0005524">
    <property type="term" value="F:ATP binding"/>
    <property type="evidence" value="ECO:0007669"/>
    <property type="project" value="UniProtKB-UniRule"/>
</dbReference>
<dbReference type="GO" id="GO:0000053">
    <property type="term" value="P:argininosuccinate metabolic process"/>
    <property type="evidence" value="ECO:0007669"/>
    <property type="project" value="TreeGrafter"/>
</dbReference>
<dbReference type="GO" id="GO:0006526">
    <property type="term" value="P:L-arginine biosynthetic process"/>
    <property type="evidence" value="ECO:0007669"/>
    <property type="project" value="UniProtKB-UniRule"/>
</dbReference>
<dbReference type="GO" id="GO:0000050">
    <property type="term" value="P:urea cycle"/>
    <property type="evidence" value="ECO:0007669"/>
    <property type="project" value="TreeGrafter"/>
</dbReference>
<dbReference type="CDD" id="cd01999">
    <property type="entry name" value="ASS"/>
    <property type="match status" value="1"/>
</dbReference>
<dbReference type="FunFam" id="3.40.50.620:FF:000019">
    <property type="entry name" value="Argininosuccinate synthase"/>
    <property type="match status" value="1"/>
</dbReference>
<dbReference type="FunFam" id="3.90.1260.10:FF:000007">
    <property type="entry name" value="Argininosuccinate synthase"/>
    <property type="match status" value="1"/>
</dbReference>
<dbReference type="Gene3D" id="3.90.1260.10">
    <property type="entry name" value="Argininosuccinate synthetase, chain A, domain 2"/>
    <property type="match status" value="1"/>
</dbReference>
<dbReference type="Gene3D" id="3.40.50.620">
    <property type="entry name" value="HUPs"/>
    <property type="match status" value="1"/>
</dbReference>
<dbReference type="Gene3D" id="1.20.5.470">
    <property type="entry name" value="Single helix bin"/>
    <property type="match status" value="1"/>
</dbReference>
<dbReference type="HAMAP" id="MF_00005">
    <property type="entry name" value="Arg_succ_synth_type1"/>
    <property type="match status" value="1"/>
</dbReference>
<dbReference type="InterPro" id="IPR048268">
    <property type="entry name" value="Arginosuc_syn_C"/>
</dbReference>
<dbReference type="InterPro" id="IPR048267">
    <property type="entry name" value="Arginosuc_syn_N"/>
</dbReference>
<dbReference type="InterPro" id="IPR001518">
    <property type="entry name" value="Arginosuc_synth"/>
</dbReference>
<dbReference type="InterPro" id="IPR018223">
    <property type="entry name" value="Arginosuc_synth_CS"/>
</dbReference>
<dbReference type="InterPro" id="IPR023434">
    <property type="entry name" value="Arginosuc_synth_type_1_subfam"/>
</dbReference>
<dbReference type="InterPro" id="IPR024074">
    <property type="entry name" value="AS_cat/multimer_dom_body"/>
</dbReference>
<dbReference type="InterPro" id="IPR014729">
    <property type="entry name" value="Rossmann-like_a/b/a_fold"/>
</dbReference>
<dbReference type="NCBIfam" id="TIGR00032">
    <property type="entry name" value="argG"/>
    <property type="match status" value="1"/>
</dbReference>
<dbReference type="NCBIfam" id="NF001770">
    <property type="entry name" value="PRK00509.1"/>
    <property type="match status" value="1"/>
</dbReference>
<dbReference type="PANTHER" id="PTHR11587">
    <property type="entry name" value="ARGININOSUCCINATE SYNTHASE"/>
    <property type="match status" value="1"/>
</dbReference>
<dbReference type="PANTHER" id="PTHR11587:SF2">
    <property type="entry name" value="ARGININOSUCCINATE SYNTHASE"/>
    <property type="match status" value="1"/>
</dbReference>
<dbReference type="Pfam" id="PF20979">
    <property type="entry name" value="Arginosuc_syn_C"/>
    <property type="match status" value="1"/>
</dbReference>
<dbReference type="Pfam" id="PF00764">
    <property type="entry name" value="Arginosuc_synth"/>
    <property type="match status" value="1"/>
</dbReference>
<dbReference type="SUPFAM" id="SSF52402">
    <property type="entry name" value="Adenine nucleotide alpha hydrolases-like"/>
    <property type="match status" value="1"/>
</dbReference>
<dbReference type="SUPFAM" id="SSF69864">
    <property type="entry name" value="Argininosuccinate synthetase, C-terminal domain"/>
    <property type="match status" value="1"/>
</dbReference>
<dbReference type="PROSITE" id="PS00564">
    <property type="entry name" value="ARGININOSUCCIN_SYN_1"/>
    <property type="match status" value="1"/>
</dbReference>
<dbReference type="PROSITE" id="PS00565">
    <property type="entry name" value="ARGININOSUCCIN_SYN_2"/>
    <property type="match status" value="1"/>
</dbReference>
<comment type="catalytic activity">
    <reaction evidence="1">
        <text>L-citrulline + L-aspartate + ATP = 2-(N(omega)-L-arginino)succinate + AMP + diphosphate + H(+)</text>
        <dbReference type="Rhea" id="RHEA:10932"/>
        <dbReference type="ChEBI" id="CHEBI:15378"/>
        <dbReference type="ChEBI" id="CHEBI:29991"/>
        <dbReference type="ChEBI" id="CHEBI:30616"/>
        <dbReference type="ChEBI" id="CHEBI:33019"/>
        <dbReference type="ChEBI" id="CHEBI:57472"/>
        <dbReference type="ChEBI" id="CHEBI:57743"/>
        <dbReference type="ChEBI" id="CHEBI:456215"/>
        <dbReference type="EC" id="6.3.4.5"/>
    </reaction>
</comment>
<comment type="pathway">
    <text evidence="1">Amino-acid biosynthesis; L-arginine biosynthesis; L-arginine from L-ornithine and carbamoyl phosphate: step 2/3.</text>
</comment>
<comment type="subunit">
    <text evidence="1">Homotetramer.</text>
</comment>
<comment type="subcellular location">
    <subcellularLocation>
        <location evidence="1">Cytoplasm</location>
    </subcellularLocation>
</comment>
<comment type="similarity">
    <text evidence="1">Belongs to the argininosuccinate synthase family. Type 1 subfamily.</text>
</comment>
<evidence type="ECO:0000255" key="1">
    <source>
        <dbReference type="HAMAP-Rule" id="MF_00005"/>
    </source>
</evidence>
<name>ASSY_SYNJA</name>